<name>LAM55_STREK</name>
<evidence type="ECO:0000255" key="1"/>
<evidence type="ECO:0000256" key="2">
    <source>
        <dbReference type="SAM" id="MobiDB-lite"/>
    </source>
</evidence>
<evidence type="ECO:0000269" key="3">
    <source>
    </source>
</evidence>
<evidence type="ECO:0000269" key="4">
    <source>
    </source>
</evidence>
<evidence type="ECO:0000303" key="5">
    <source>
    </source>
</evidence>
<evidence type="ECO:0000305" key="6"/>
<evidence type="ECO:0000305" key="7">
    <source>
    </source>
</evidence>
<evidence type="ECO:0000312" key="8">
    <source>
        <dbReference type="EMBL" id="AEN12197.1"/>
    </source>
</evidence>
<evidence type="ECO:0007829" key="9">
    <source>
        <dbReference type="PDB" id="4PEY"/>
    </source>
</evidence>
<evidence type="ECO:0007829" key="10">
    <source>
        <dbReference type="PDB" id="4TYV"/>
    </source>
</evidence>
<evidence type="ECO:0007829" key="11">
    <source>
        <dbReference type="PDB" id="4TZ1"/>
    </source>
</evidence>
<reference key="1">
    <citation type="submission" date="2011-08" db="EMBL/GenBank/DDBJ databases">
        <title>Complete sequence of Streptomyces sp. SirexAA-E.</title>
        <authorList>
            <consortium name="US DOE Joint Genome Institute"/>
            <person name="Lucas S."/>
            <person name="Han J."/>
            <person name="Lapidus A."/>
            <person name="Cheng J.-F."/>
            <person name="Goodwin L."/>
            <person name="Pitluck S."/>
            <person name="Peters L."/>
            <person name="Ovchinnikova G."/>
            <person name="Davenport K."/>
            <person name="Detter J.C."/>
            <person name="Han C."/>
            <person name="Tapia R."/>
            <person name="Land M."/>
            <person name="Hauser L."/>
            <person name="Kyrpides N."/>
            <person name="Ivanova N."/>
            <person name="Pagani I."/>
            <person name="Adams A."/>
            <person name="Raffa K."/>
            <person name="Adams S."/>
            <person name="Book A."/>
            <person name="Currie C."/>
            <person name="Woyke T."/>
        </authorList>
    </citation>
    <scope>NUCLEOTIDE SEQUENCE [LARGE SCALE GENOMIC DNA]</scope>
    <source>
        <strain>SirexAA-E / ActE</strain>
    </source>
</reference>
<reference key="2">
    <citation type="journal article" date="2013" name="Sci. Rep.">
        <title>Aerobic deconstruction of cellulosic biomass by an insect-associated Streptomyces.</title>
        <authorList>
            <person name="Takasuka T.E."/>
            <person name="Book A.J."/>
            <person name="Lewin G.R."/>
            <person name="Currie C.R."/>
            <person name="Fox B.G."/>
        </authorList>
    </citation>
    <scope>INDUCTION</scope>
    <scope>SUBCELLULAR LOCATION</scope>
    <source>
        <strain>SirexAA-E / ActE</strain>
    </source>
</reference>
<reference key="3">
    <citation type="journal article" date="2015" name="J. Biol. Chem.">
        <title>Active site and laminarin binding in glycoside hydrolase family 55.</title>
        <authorList>
            <person name="Bianchetti C.M."/>
            <person name="Takasuka T.E."/>
            <person name="Deutsch S."/>
            <person name="Udell H.S."/>
            <person name="Yik E.J."/>
            <person name="Bergeman L.F."/>
            <person name="Fox B.G."/>
        </authorList>
    </citation>
    <scope>X-RAY CRYSTALLOGRAPHY (1.50 ANGSTROMS) OF 46-605 OF WILD-TYPE AND MUTANT ALA-502 IN COMPLEXES WITH PRODUCT AND SUBSTRATES</scope>
    <scope>FUNCTION</scope>
    <scope>CATALYTIC ACTIVITY</scope>
    <scope>BIOPHYSICOCHEMICAL PROPERTIES</scope>
    <scope>ACTIVE SITE</scope>
    <scope>MUTAGENESIS OF GLN-174; SER-198; ASP-449; GLU-480; GLU-502 AND TYR-505</scope>
    <scope>REACTION MECHANISM</scope>
    <source>
        <strain>SirexAA-E / ActE</strain>
    </source>
</reference>
<comment type="function">
    <text evidence="4">Exo-beta-1,3-glucanase that specifically hydrolyzes laminarin and laminarioligosaccharides, producing glucose and laminaribiose as end products.</text>
</comment>
<comment type="catalytic activity">
    <reaction evidence="4">
        <text>Successive hydrolysis of beta-D-glucose units from the non-reducing ends of (1-&gt;3)-beta-D-glucans, releasing alpha-glucose.</text>
        <dbReference type="EC" id="3.2.1.58"/>
    </reaction>
</comment>
<comment type="biophysicochemical properties">
    <kinetics>
        <KM evidence="4">0.93 mg/ml for L.digitata soluble laminarin (at pH 6 and 40 degrees Celsius)</KM>
        <Vmax evidence="4">128.0 umol/min/mg enzyme with L.digitata soluble laminarin as substrate (at pH 6 and 40 degrees Celsius)</Vmax>
        <text evidence="4">kcat is 138 sec(-1) with L.digitata soluble laminarin as substrate (at pH 6 and 40 degrees Celsius).</text>
    </kinetics>
    <phDependence>
        <text evidence="4">Optimum pH is 6. Maintains 70% or more of the maximal activity from pH 6.0 to 9.0.</text>
    </phDependence>
    <temperatureDependence>
        <text evidence="4">Optimum temperature is 50 degrees Celsius. Maintains 70% or more of the maximal activity from 35 to 65 degrees Celsius.</text>
    </temperatureDependence>
</comment>
<comment type="subcellular location">
    <subcellularLocation>
        <location evidence="3">Secreted</location>
    </subcellularLocation>
</comment>
<comment type="induction">
    <text evidence="3">Is up-regulated during growth on biomass, i.e. when the bacterium is grown on cellobiose, xylan, and various pretreated switchgrass samples.</text>
</comment>
<comment type="similarity">
    <text evidence="6">Belongs to the glycosyl hydrolase 55 family.</text>
</comment>
<dbReference type="EC" id="3.2.1.58" evidence="4"/>
<dbReference type="EMBL" id="CP002993">
    <property type="protein sequence ID" value="AEN12197.1"/>
    <property type="molecule type" value="Genomic_DNA"/>
</dbReference>
<dbReference type="RefSeq" id="WP_014048156.1">
    <property type="nucleotide sequence ID" value="NC_015953.1"/>
</dbReference>
<dbReference type="PDB" id="4PEW">
    <property type="method" value="X-ray"/>
    <property type="resolution" value="1.51 A"/>
    <property type="chains" value="A/B=46-605"/>
</dbReference>
<dbReference type="PDB" id="4PEX">
    <property type="method" value="X-ray"/>
    <property type="resolution" value="1.75 A"/>
    <property type="chains" value="A/B=46-605"/>
</dbReference>
<dbReference type="PDB" id="4PEY">
    <property type="method" value="X-ray"/>
    <property type="resolution" value="1.50 A"/>
    <property type="chains" value="A=46-605"/>
</dbReference>
<dbReference type="PDB" id="4PEZ">
    <property type="method" value="X-ray"/>
    <property type="resolution" value="1.90 A"/>
    <property type="chains" value="A=46-605"/>
</dbReference>
<dbReference type="PDB" id="4PF0">
    <property type="method" value="X-ray"/>
    <property type="resolution" value="1.75 A"/>
    <property type="chains" value="A/B=46-605"/>
</dbReference>
<dbReference type="PDB" id="4TYV">
    <property type="method" value="X-ray"/>
    <property type="resolution" value="1.75 A"/>
    <property type="chains" value="A/B=55-605"/>
</dbReference>
<dbReference type="PDB" id="4TZ1">
    <property type="method" value="X-ray"/>
    <property type="resolution" value="1.50 A"/>
    <property type="chains" value="A=57-605"/>
</dbReference>
<dbReference type="PDB" id="4TZ3">
    <property type="method" value="X-ray"/>
    <property type="resolution" value="1.90 A"/>
    <property type="chains" value="A=57-605"/>
</dbReference>
<dbReference type="PDB" id="4TZ5">
    <property type="method" value="X-ray"/>
    <property type="resolution" value="1.75 A"/>
    <property type="chains" value="A/B=57-605"/>
</dbReference>
<dbReference type="PDBsum" id="4PEW"/>
<dbReference type="PDBsum" id="4PEX"/>
<dbReference type="PDBsum" id="4PEY"/>
<dbReference type="PDBsum" id="4PEZ"/>
<dbReference type="PDBsum" id="4PF0"/>
<dbReference type="PDBsum" id="4TYV"/>
<dbReference type="PDBsum" id="4TZ1"/>
<dbReference type="PDBsum" id="4TZ3"/>
<dbReference type="PDBsum" id="4TZ5"/>
<dbReference type="SMR" id="G2NFJ9"/>
<dbReference type="STRING" id="862751.SACTE_4363"/>
<dbReference type="KEGG" id="ssx:SACTE_4363"/>
<dbReference type="PATRIC" id="fig|862751.12.peg.4534"/>
<dbReference type="eggNOG" id="ENOG502Z7WW">
    <property type="taxonomic scope" value="Bacteria"/>
</dbReference>
<dbReference type="HOGENOM" id="CLU_013797_1_0_11"/>
<dbReference type="OrthoDB" id="2479530at2"/>
<dbReference type="EvolutionaryTrace" id="G2NFJ9"/>
<dbReference type="Proteomes" id="UP000001397">
    <property type="component" value="Chromosome"/>
</dbReference>
<dbReference type="GO" id="GO:0005576">
    <property type="term" value="C:extracellular region"/>
    <property type="evidence" value="ECO:0007669"/>
    <property type="project" value="UniProtKB-SubCell"/>
</dbReference>
<dbReference type="GO" id="GO:0004338">
    <property type="term" value="F:glucan exo-1,3-beta-glucosidase activity"/>
    <property type="evidence" value="ECO:0000314"/>
    <property type="project" value="UniProtKB"/>
</dbReference>
<dbReference type="GO" id="GO:0009251">
    <property type="term" value="P:glucan catabolic process"/>
    <property type="evidence" value="ECO:0000314"/>
    <property type="project" value="UniProtKB"/>
</dbReference>
<dbReference type="CDD" id="cd23669">
    <property type="entry name" value="GH55_SacteLam55A-like"/>
    <property type="match status" value="1"/>
</dbReference>
<dbReference type="FunFam" id="2.160.20.10:FF:000078">
    <property type="entry name" value="Coagulation factor 5/8 type domain-containing protein"/>
    <property type="match status" value="1"/>
</dbReference>
<dbReference type="Gene3D" id="2.160.20.10">
    <property type="entry name" value="Single-stranded right-handed beta-helix, Pectin lyase-like"/>
    <property type="match status" value="1"/>
</dbReference>
<dbReference type="InterPro" id="IPR012334">
    <property type="entry name" value="Pectin_lyas_fold"/>
</dbReference>
<sequence>MHVPPTDPARSAPPASPHRRRRPKALGLTALAAAMLMAVPTTQAAFGSDVRPAAAQEVVGGGDLGPNVLVFDPSTPDIQGKVDEVFRKQESNQFGTDRYALMFKPGTYNDINAQIGFYTSIAGLGLNPDDTTFNGDVTVDAGWFDGNATQNFWRSAENLALNPVNGTNRWAVSQAAPFRRMHVKGGLNLAPDGYGWASGGYIADSKIDGEVGPYSQQQWYTRDSSVGGWGNGVWNMTFSGVEGAPAQSFPEPPYTTLETTPVSREKPFLYLDGDDYKVFVPAKRTNARGTSWGNGTPEGESLPLDQFYVVKPGATAETINAAVDQGLHLLFTPGVYHVDQPIEIDRANTVALGLGLATIIPDNGVTALKVGDVDGVKVAGLLVDAGPVNSETLVEVGSDGASGDHAANPTSLQDVFVRIGGAGPGKATTSIVVNSNDTIIDHTWVWRADHGEGVGWETNRADYGVHVKGDNVLATGLFVEHFNKYDVQWSGENGKTIFYQNEKAYDAPDQAAIQNGDIKGYAAYKVDDSVTTHEGWGMGSYCYFNVNPDIRQQHGFQAPVKPGVKFHDLLVVSLGGKGQYEHVINDIGDPTSGDTTIPSQVVSFP</sequence>
<gene>
    <name evidence="8" type="ORF">SACTE_4363</name>
</gene>
<proteinExistence type="evidence at protein level"/>
<feature type="signal peptide" evidence="1">
    <location>
        <begin position="1"/>
        <end position="44"/>
    </location>
</feature>
<feature type="chain" id="PRO_0000433464" description="Exo-beta-1,3-glucanase">
    <location>
        <begin position="45"/>
        <end position="605"/>
    </location>
</feature>
<feature type="region of interest" description="Disordered" evidence="2">
    <location>
        <begin position="1"/>
        <end position="23"/>
    </location>
</feature>
<feature type="active site" description="Proton donor" evidence="7">
    <location>
        <position position="502"/>
    </location>
</feature>
<feature type="binding site" evidence="4">
    <location>
        <position position="174"/>
    </location>
    <ligand>
        <name>substrate</name>
    </ligand>
</feature>
<feature type="binding site" evidence="4">
    <location>
        <begin position="194"/>
        <end position="196"/>
    </location>
    <ligand>
        <name>substrate</name>
    </ligand>
</feature>
<feature type="binding site" evidence="4">
    <location>
        <position position="217"/>
    </location>
    <ligand>
        <name>substrate</name>
    </ligand>
</feature>
<feature type="binding site" evidence="4">
    <location>
        <begin position="446"/>
        <end position="449"/>
    </location>
    <ligand>
        <name>substrate</name>
    </ligand>
</feature>
<feature type="binding site" evidence="4">
    <location>
        <begin position="480"/>
        <end position="481"/>
    </location>
    <ligand>
        <name>substrate</name>
    </ligand>
</feature>
<feature type="binding site" evidence="4">
    <location>
        <position position="505"/>
    </location>
    <ligand>
        <name>substrate</name>
    </ligand>
</feature>
<feature type="mutagenesis site" description="1300-fold decrease in catalytic efficiency." evidence="4">
    <original>Q</original>
    <variation>A</variation>
    <location>
        <position position="174"/>
    </location>
</feature>
<feature type="mutagenesis site" description="280-fold decrease in catalytic efficiency." evidence="4">
    <original>Q</original>
    <variation>N</variation>
    <location>
        <position position="174"/>
    </location>
</feature>
<feature type="mutagenesis site" description="13-fold decrease in catalytic efficiency while nearly no effect on substrate affinity." evidence="4">
    <original>S</original>
    <variation>A</variation>
    <location>
        <position position="198"/>
    </location>
</feature>
<feature type="mutagenesis site" description="1200-fold decrease in catalytic efficiency." evidence="4">
    <original>D</original>
    <variation>A</variation>
    <location>
        <position position="449"/>
    </location>
</feature>
<feature type="mutagenesis site" description="330-fold decrease in catalytic efficiency while only 2-fold decrease in substrate affinity." evidence="4">
    <original>D</original>
    <variation>N</variation>
    <location>
        <position position="449"/>
    </location>
</feature>
<feature type="mutagenesis site" description="Loss of enzymatic activity." evidence="4">
    <original>E</original>
    <variation>A</variation>
    <variation>Q</variation>
    <location>
        <position position="480"/>
    </location>
</feature>
<feature type="mutagenesis site" description="Loss of enzymatic activity." evidence="4">
    <original>E</original>
    <variation>A</variation>
    <variation>Q</variation>
    <location>
        <position position="502"/>
    </location>
</feature>
<feature type="mutagenesis site" description="150-fold decrease in catalytic efficiency." evidence="4">
    <original>Y</original>
    <variation>A</variation>
    <location>
        <position position="505"/>
    </location>
</feature>
<feature type="strand" evidence="9">
    <location>
        <begin position="68"/>
        <end position="71"/>
    </location>
</feature>
<feature type="helix" evidence="9">
    <location>
        <begin position="78"/>
        <end position="89"/>
    </location>
</feature>
<feature type="strand" evidence="9">
    <location>
        <begin position="99"/>
        <end position="103"/>
    </location>
</feature>
<feature type="strand" evidence="9">
    <location>
        <begin position="105"/>
        <end position="114"/>
    </location>
</feature>
<feature type="strand" evidence="9">
    <location>
        <begin position="119"/>
        <end position="123"/>
    </location>
</feature>
<feature type="strand" evidence="9">
    <location>
        <begin position="125"/>
        <end position="127"/>
    </location>
</feature>
<feature type="helix" evidence="9">
    <location>
        <begin position="128"/>
        <end position="130"/>
    </location>
</feature>
<feature type="strand" evidence="9">
    <location>
        <begin position="131"/>
        <end position="139"/>
    </location>
</feature>
<feature type="helix" evidence="9">
    <location>
        <begin position="142"/>
        <end position="144"/>
    </location>
</feature>
<feature type="helix" evidence="10">
    <location>
        <begin position="148"/>
        <end position="150"/>
    </location>
</feature>
<feature type="strand" evidence="9">
    <location>
        <begin position="153"/>
        <end position="158"/>
    </location>
</feature>
<feature type="strand" evidence="9">
    <location>
        <begin position="160"/>
        <end position="162"/>
    </location>
</feature>
<feature type="strand" evidence="9">
    <location>
        <begin position="166"/>
        <end position="170"/>
    </location>
</feature>
<feature type="strand" evidence="9">
    <location>
        <begin position="178"/>
        <end position="180"/>
    </location>
</feature>
<feature type="strand" evidence="9">
    <location>
        <begin position="182"/>
        <end position="188"/>
    </location>
</feature>
<feature type="strand" evidence="9">
    <location>
        <begin position="201"/>
        <end position="204"/>
    </location>
</feature>
<feature type="strand" evidence="9">
    <location>
        <begin position="206"/>
        <end position="212"/>
    </location>
</feature>
<feature type="strand" evidence="9">
    <location>
        <begin position="216"/>
        <end position="229"/>
    </location>
</feature>
<feature type="strand" evidence="9">
    <location>
        <begin position="233"/>
        <end position="242"/>
    </location>
</feature>
<feature type="strand" evidence="11">
    <location>
        <begin position="250"/>
        <end position="252"/>
    </location>
</feature>
<feature type="strand" evidence="9">
    <location>
        <begin position="254"/>
        <end position="264"/>
    </location>
</feature>
<feature type="strand" evidence="9">
    <location>
        <begin position="268"/>
        <end position="272"/>
    </location>
</feature>
<feature type="strand" evidence="9">
    <location>
        <begin position="275"/>
        <end position="281"/>
    </location>
</feature>
<feature type="strand" evidence="9">
    <location>
        <begin position="283"/>
        <end position="287"/>
    </location>
</feature>
<feature type="strand" evidence="9">
    <location>
        <begin position="298"/>
        <end position="303"/>
    </location>
</feature>
<feature type="helix" evidence="9">
    <location>
        <begin position="304"/>
        <end position="306"/>
    </location>
</feature>
<feature type="strand" evidence="9">
    <location>
        <begin position="307"/>
        <end position="310"/>
    </location>
</feature>
<feature type="helix" evidence="9">
    <location>
        <begin position="316"/>
        <end position="324"/>
    </location>
</feature>
<feature type="strand" evidence="9">
    <location>
        <begin position="328"/>
        <end position="331"/>
    </location>
</feature>
<feature type="strand" evidence="9">
    <location>
        <begin position="333"/>
        <end position="340"/>
    </location>
</feature>
<feature type="strand" evidence="9">
    <location>
        <begin position="342"/>
        <end position="344"/>
    </location>
</feature>
<feature type="strand" evidence="9">
    <location>
        <begin position="350"/>
        <end position="354"/>
    </location>
</feature>
<feature type="strand" evidence="9">
    <location>
        <begin position="358"/>
        <end position="361"/>
    </location>
</feature>
<feature type="strand" evidence="9">
    <location>
        <begin position="367"/>
        <end position="370"/>
    </location>
</feature>
<feature type="strand" evidence="9">
    <location>
        <begin position="377"/>
        <end position="384"/>
    </location>
</feature>
<feature type="strand" evidence="9">
    <location>
        <begin position="390"/>
        <end position="397"/>
    </location>
</feature>
<feature type="strand" evidence="9">
    <location>
        <begin position="406"/>
        <end position="408"/>
    </location>
</feature>
<feature type="strand" evidence="9">
    <location>
        <begin position="411"/>
        <end position="423"/>
    </location>
</feature>
<feature type="strand" evidence="9">
    <location>
        <begin position="427"/>
        <end position="433"/>
    </location>
</feature>
<feature type="strand" evidence="9">
    <location>
        <begin position="439"/>
        <end position="447"/>
    </location>
</feature>
<feature type="strand" evidence="9">
    <location>
        <begin position="449"/>
        <end position="453"/>
    </location>
</feature>
<feature type="turn" evidence="9">
    <location>
        <begin position="456"/>
        <end position="459"/>
    </location>
</feature>
<feature type="strand" evidence="9">
    <location>
        <begin position="463"/>
        <end position="467"/>
    </location>
</feature>
<feature type="strand" evidence="9">
    <location>
        <begin position="469"/>
        <end position="471"/>
    </location>
</feature>
<feature type="strand" evidence="9">
    <location>
        <begin position="473"/>
        <end position="480"/>
    </location>
</feature>
<feature type="strand" evidence="9">
    <location>
        <begin position="486"/>
        <end position="489"/>
    </location>
</feature>
<feature type="strand" evidence="9">
    <location>
        <begin position="491"/>
        <end position="502"/>
    </location>
</feature>
<feature type="helix" evidence="9">
    <location>
        <begin position="510"/>
        <end position="513"/>
    </location>
</feature>
<feature type="strand" evidence="9">
    <location>
        <begin position="518"/>
        <end position="520"/>
    </location>
</feature>
<feature type="strand" evidence="9">
    <location>
        <begin position="523"/>
        <end position="526"/>
    </location>
</feature>
<feature type="strand" evidence="9">
    <location>
        <begin position="533"/>
        <end position="542"/>
    </location>
</feature>
<feature type="strand" evidence="9">
    <location>
        <begin position="555"/>
        <end position="557"/>
    </location>
</feature>
<feature type="strand" evidence="9">
    <location>
        <begin position="564"/>
        <end position="574"/>
    </location>
</feature>
<feature type="strand" evidence="9">
    <location>
        <begin position="577"/>
        <end position="581"/>
    </location>
</feature>
<feature type="strand" evidence="9">
    <location>
        <begin position="593"/>
        <end position="595"/>
    </location>
</feature>
<feature type="strand" evidence="9">
    <location>
        <begin position="599"/>
        <end position="604"/>
    </location>
</feature>
<organism>
    <name type="scientific">Streptomyces sp. (strain SirexAA-E / ActE)</name>
    <dbReference type="NCBI Taxonomy" id="862751"/>
    <lineage>
        <taxon>Bacteria</taxon>
        <taxon>Bacillati</taxon>
        <taxon>Actinomycetota</taxon>
        <taxon>Actinomycetes</taxon>
        <taxon>Kitasatosporales</taxon>
        <taxon>Streptomycetaceae</taxon>
        <taxon>Streptomyces</taxon>
    </lineage>
</organism>
<keyword id="KW-0002">3D-structure</keyword>
<keyword id="KW-0119">Carbohydrate metabolism</keyword>
<keyword id="KW-0326">Glycosidase</keyword>
<keyword id="KW-0378">Hydrolase</keyword>
<keyword id="KW-0624">Polysaccharide degradation</keyword>
<keyword id="KW-1185">Reference proteome</keyword>
<keyword id="KW-0964">Secreted</keyword>
<keyword id="KW-0732">Signal</keyword>
<protein>
    <recommendedName>
        <fullName evidence="5">Exo-beta-1,3-glucanase</fullName>
        <ecNumber evidence="4">3.2.1.58</ecNumber>
    </recommendedName>
    <alternativeName>
        <fullName evidence="7">Glucan 1,3-beta-glucosidase</fullName>
    </alternativeName>
    <alternativeName>
        <fullName evidence="5">Laminarinase</fullName>
    </alternativeName>
    <alternativeName>
        <fullName evidence="5">SacteLam55A</fullName>
    </alternativeName>
</protein>
<accession>G2NFJ9</accession>